<gene>
    <name evidence="2" type="primary">tuf2</name>
    <name type="ordered locus">Hhal_0872</name>
</gene>
<protein>
    <recommendedName>
        <fullName evidence="2">Elongation factor Tu 2</fullName>
        <shortName evidence="2">EF-Tu 2</shortName>
        <ecNumber evidence="2">3.6.5.3</ecNumber>
    </recommendedName>
</protein>
<feature type="chain" id="PRO_0000337404" description="Elongation factor Tu 2">
    <location>
        <begin position="1"/>
        <end position="396"/>
    </location>
</feature>
<feature type="domain" description="tr-type G">
    <location>
        <begin position="10"/>
        <end position="206"/>
    </location>
</feature>
<feature type="region of interest" description="G1" evidence="1">
    <location>
        <begin position="19"/>
        <end position="26"/>
    </location>
</feature>
<feature type="region of interest" description="G2" evidence="1">
    <location>
        <begin position="60"/>
        <end position="64"/>
    </location>
</feature>
<feature type="region of interest" description="G3" evidence="1">
    <location>
        <begin position="81"/>
        <end position="84"/>
    </location>
</feature>
<feature type="region of interest" description="G4" evidence="1">
    <location>
        <begin position="136"/>
        <end position="139"/>
    </location>
</feature>
<feature type="region of interest" description="G5" evidence="1">
    <location>
        <begin position="174"/>
        <end position="176"/>
    </location>
</feature>
<feature type="binding site" evidence="2">
    <location>
        <begin position="19"/>
        <end position="26"/>
    </location>
    <ligand>
        <name>GTP</name>
        <dbReference type="ChEBI" id="CHEBI:37565"/>
    </ligand>
</feature>
<feature type="binding site" evidence="2">
    <location>
        <position position="26"/>
    </location>
    <ligand>
        <name>Mg(2+)</name>
        <dbReference type="ChEBI" id="CHEBI:18420"/>
    </ligand>
</feature>
<feature type="binding site" evidence="2">
    <location>
        <begin position="81"/>
        <end position="85"/>
    </location>
    <ligand>
        <name>GTP</name>
        <dbReference type="ChEBI" id="CHEBI:37565"/>
    </ligand>
</feature>
<feature type="binding site" evidence="2">
    <location>
        <begin position="136"/>
        <end position="139"/>
    </location>
    <ligand>
        <name>GTP</name>
        <dbReference type="ChEBI" id="CHEBI:37565"/>
    </ligand>
</feature>
<organism>
    <name type="scientific">Halorhodospira halophila (strain DSM 244 / SL1)</name>
    <name type="common">Ectothiorhodospira halophila (strain DSM 244 / SL1)</name>
    <dbReference type="NCBI Taxonomy" id="349124"/>
    <lineage>
        <taxon>Bacteria</taxon>
        <taxon>Pseudomonadati</taxon>
        <taxon>Pseudomonadota</taxon>
        <taxon>Gammaproteobacteria</taxon>
        <taxon>Chromatiales</taxon>
        <taxon>Ectothiorhodospiraceae</taxon>
        <taxon>Halorhodospira</taxon>
    </lineage>
</organism>
<accession>A1WVD6</accession>
<dbReference type="EC" id="3.6.5.3" evidence="2"/>
<dbReference type="EMBL" id="CP000544">
    <property type="protein sequence ID" value="ABM61648.1"/>
    <property type="molecule type" value="Genomic_DNA"/>
</dbReference>
<dbReference type="RefSeq" id="WP_011813671.1">
    <property type="nucleotide sequence ID" value="NC_008789.1"/>
</dbReference>
<dbReference type="SMR" id="A1WVD6"/>
<dbReference type="STRING" id="349124.Hhal_0872"/>
<dbReference type="KEGG" id="hha:Hhal_0872"/>
<dbReference type="eggNOG" id="COG0050">
    <property type="taxonomic scope" value="Bacteria"/>
</dbReference>
<dbReference type="HOGENOM" id="CLU_007265_0_0_6"/>
<dbReference type="OrthoDB" id="9803139at2"/>
<dbReference type="Proteomes" id="UP000000647">
    <property type="component" value="Chromosome"/>
</dbReference>
<dbReference type="GO" id="GO:0005829">
    <property type="term" value="C:cytosol"/>
    <property type="evidence" value="ECO:0007669"/>
    <property type="project" value="TreeGrafter"/>
</dbReference>
<dbReference type="GO" id="GO:0005525">
    <property type="term" value="F:GTP binding"/>
    <property type="evidence" value="ECO:0007669"/>
    <property type="project" value="UniProtKB-UniRule"/>
</dbReference>
<dbReference type="GO" id="GO:0003924">
    <property type="term" value="F:GTPase activity"/>
    <property type="evidence" value="ECO:0007669"/>
    <property type="project" value="InterPro"/>
</dbReference>
<dbReference type="GO" id="GO:0097216">
    <property type="term" value="F:guanosine tetraphosphate binding"/>
    <property type="evidence" value="ECO:0007669"/>
    <property type="project" value="UniProtKB-ARBA"/>
</dbReference>
<dbReference type="GO" id="GO:0003746">
    <property type="term" value="F:translation elongation factor activity"/>
    <property type="evidence" value="ECO:0007669"/>
    <property type="project" value="UniProtKB-UniRule"/>
</dbReference>
<dbReference type="CDD" id="cd01884">
    <property type="entry name" value="EF_Tu"/>
    <property type="match status" value="1"/>
</dbReference>
<dbReference type="CDD" id="cd03697">
    <property type="entry name" value="EFTU_II"/>
    <property type="match status" value="1"/>
</dbReference>
<dbReference type="CDD" id="cd03707">
    <property type="entry name" value="EFTU_III"/>
    <property type="match status" value="1"/>
</dbReference>
<dbReference type="FunFam" id="2.40.30.10:FF:000001">
    <property type="entry name" value="Elongation factor Tu"/>
    <property type="match status" value="1"/>
</dbReference>
<dbReference type="FunFam" id="3.40.50.300:FF:000003">
    <property type="entry name" value="Elongation factor Tu"/>
    <property type="match status" value="1"/>
</dbReference>
<dbReference type="Gene3D" id="3.40.50.300">
    <property type="entry name" value="P-loop containing nucleotide triphosphate hydrolases"/>
    <property type="match status" value="1"/>
</dbReference>
<dbReference type="Gene3D" id="2.40.30.10">
    <property type="entry name" value="Translation factors"/>
    <property type="match status" value="2"/>
</dbReference>
<dbReference type="HAMAP" id="MF_00118_B">
    <property type="entry name" value="EF_Tu_B"/>
    <property type="match status" value="1"/>
</dbReference>
<dbReference type="InterPro" id="IPR041709">
    <property type="entry name" value="EF-Tu_GTP-bd"/>
</dbReference>
<dbReference type="InterPro" id="IPR050055">
    <property type="entry name" value="EF-Tu_GTPase"/>
</dbReference>
<dbReference type="InterPro" id="IPR004161">
    <property type="entry name" value="EFTu-like_2"/>
</dbReference>
<dbReference type="InterPro" id="IPR033720">
    <property type="entry name" value="EFTU_2"/>
</dbReference>
<dbReference type="InterPro" id="IPR031157">
    <property type="entry name" value="G_TR_CS"/>
</dbReference>
<dbReference type="InterPro" id="IPR027417">
    <property type="entry name" value="P-loop_NTPase"/>
</dbReference>
<dbReference type="InterPro" id="IPR005225">
    <property type="entry name" value="Small_GTP-bd"/>
</dbReference>
<dbReference type="InterPro" id="IPR000795">
    <property type="entry name" value="T_Tr_GTP-bd_dom"/>
</dbReference>
<dbReference type="InterPro" id="IPR009000">
    <property type="entry name" value="Transl_B-barrel_sf"/>
</dbReference>
<dbReference type="InterPro" id="IPR009001">
    <property type="entry name" value="Transl_elong_EF1A/Init_IF2_C"/>
</dbReference>
<dbReference type="InterPro" id="IPR004541">
    <property type="entry name" value="Transl_elong_EFTu/EF1A_bac/org"/>
</dbReference>
<dbReference type="InterPro" id="IPR004160">
    <property type="entry name" value="Transl_elong_EFTu/EF1A_C"/>
</dbReference>
<dbReference type="NCBIfam" id="TIGR00485">
    <property type="entry name" value="EF-Tu"/>
    <property type="match status" value="1"/>
</dbReference>
<dbReference type="NCBIfam" id="NF000766">
    <property type="entry name" value="PRK00049.1"/>
    <property type="match status" value="1"/>
</dbReference>
<dbReference type="NCBIfam" id="NF009372">
    <property type="entry name" value="PRK12735.1"/>
    <property type="match status" value="1"/>
</dbReference>
<dbReference type="NCBIfam" id="NF009373">
    <property type="entry name" value="PRK12736.1"/>
    <property type="match status" value="1"/>
</dbReference>
<dbReference type="NCBIfam" id="TIGR00231">
    <property type="entry name" value="small_GTP"/>
    <property type="match status" value="1"/>
</dbReference>
<dbReference type="PANTHER" id="PTHR43721:SF22">
    <property type="entry name" value="ELONGATION FACTOR TU, MITOCHONDRIAL"/>
    <property type="match status" value="1"/>
</dbReference>
<dbReference type="PANTHER" id="PTHR43721">
    <property type="entry name" value="ELONGATION FACTOR TU-RELATED"/>
    <property type="match status" value="1"/>
</dbReference>
<dbReference type="Pfam" id="PF00009">
    <property type="entry name" value="GTP_EFTU"/>
    <property type="match status" value="1"/>
</dbReference>
<dbReference type="Pfam" id="PF03144">
    <property type="entry name" value="GTP_EFTU_D2"/>
    <property type="match status" value="1"/>
</dbReference>
<dbReference type="Pfam" id="PF03143">
    <property type="entry name" value="GTP_EFTU_D3"/>
    <property type="match status" value="1"/>
</dbReference>
<dbReference type="PRINTS" id="PR00315">
    <property type="entry name" value="ELONGATNFCT"/>
</dbReference>
<dbReference type="SUPFAM" id="SSF50465">
    <property type="entry name" value="EF-Tu/eEF-1alpha/eIF2-gamma C-terminal domain"/>
    <property type="match status" value="1"/>
</dbReference>
<dbReference type="SUPFAM" id="SSF52540">
    <property type="entry name" value="P-loop containing nucleoside triphosphate hydrolases"/>
    <property type="match status" value="1"/>
</dbReference>
<dbReference type="SUPFAM" id="SSF50447">
    <property type="entry name" value="Translation proteins"/>
    <property type="match status" value="1"/>
</dbReference>
<dbReference type="PROSITE" id="PS00301">
    <property type="entry name" value="G_TR_1"/>
    <property type="match status" value="1"/>
</dbReference>
<dbReference type="PROSITE" id="PS51722">
    <property type="entry name" value="G_TR_2"/>
    <property type="match status" value="1"/>
</dbReference>
<evidence type="ECO:0000250" key="1"/>
<evidence type="ECO:0000255" key="2">
    <source>
        <dbReference type="HAMAP-Rule" id="MF_00118"/>
    </source>
</evidence>
<proteinExistence type="inferred from homology"/>
<comment type="function">
    <text evidence="2">GTP hydrolase that promotes the GTP-dependent binding of aminoacyl-tRNA to the A-site of ribosomes during protein biosynthesis.</text>
</comment>
<comment type="catalytic activity">
    <reaction evidence="2">
        <text>GTP + H2O = GDP + phosphate + H(+)</text>
        <dbReference type="Rhea" id="RHEA:19669"/>
        <dbReference type="ChEBI" id="CHEBI:15377"/>
        <dbReference type="ChEBI" id="CHEBI:15378"/>
        <dbReference type="ChEBI" id="CHEBI:37565"/>
        <dbReference type="ChEBI" id="CHEBI:43474"/>
        <dbReference type="ChEBI" id="CHEBI:58189"/>
        <dbReference type="EC" id="3.6.5.3"/>
    </reaction>
    <physiologicalReaction direction="left-to-right" evidence="2">
        <dbReference type="Rhea" id="RHEA:19670"/>
    </physiologicalReaction>
</comment>
<comment type="subunit">
    <text evidence="2">Monomer.</text>
</comment>
<comment type="subcellular location">
    <subcellularLocation>
        <location evidence="2">Cytoplasm</location>
    </subcellularLocation>
</comment>
<comment type="similarity">
    <text evidence="2">Belongs to the TRAFAC class translation factor GTPase superfamily. Classic translation factor GTPase family. EF-Tu/EF-1A subfamily.</text>
</comment>
<keyword id="KW-0963">Cytoplasm</keyword>
<keyword id="KW-0251">Elongation factor</keyword>
<keyword id="KW-0342">GTP-binding</keyword>
<keyword id="KW-0378">Hydrolase</keyword>
<keyword id="KW-0460">Magnesium</keyword>
<keyword id="KW-0479">Metal-binding</keyword>
<keyword id="KW-0547">Nucleotide-binding</keyword>
<keyword id="KW-0648">Protein biosynthesis</keyword>
<keyword id="KW-1185">Reference proteome</keyword>
<sequence length="396" mass="43125">MSKEKFERKKPHINVGTIGHVDHGKTTLTAALTKVLAEAHGGDARAFDQIDNAPEERARGITIATAHVEYESESRHYAHVDCPGHADYVKNMITGAAQMDGSILVVSAADGPMPQTREHILLARQVGVPAIVVFLNKADMVDDAELLELVEMEVRELLSDYDFDGDNIPVVTGSALKALEGDDSEMGRPAIIKLVEAMDAHIPQPERPVDGDFLMPIEDVFSISGRGTVVTGRVERGVIKVGEEVEIVGITDTRKTTCTGVEMFRKLLDQGEAGDNIGALLRGIKRDDVERGQVLCKPKSITPHTHFEAEVYVLSKDEGGRHTPFFNGYRPQFYFRTTDVTGTVTLPEGTEMVMPGDNVKMTVQLIAPIAMEDGLRFAIREGGRTVGAGVVSKILD</sequence>
<name>EFTU2_HALHL</name>
<reference key="1">
    <citation type="submission" date="2006-12" db="EMBL/GenBank/DDBJ databases">
        <title>Complete sequence of Halorhodospira halophila SL1.</title>
        <authorList>
            <consortium name="US DOE Joint Genome Institute"/>
            <person name="Copeland A."/>
            <person name="Lucas S."/>
            <person name="Lapidus A."/>
            <person name="Barry K."/>
            <person name="Detter J.C."/>
            <person name="Glavina del Rio T."/>
            <person name="Hammon N."/>
            <person name="Israni S."/>
            <person name="Dalin E."/>
            <person name="Tice H."/>
            <person name="Pitluck S."/>
            <person name="Saunders E."/>
            <person name="Brettin T."/>
            <person name="Bruce D."/>
            <person name="Han C."/>
            <person name="Tapia R."/>
            <person name="Schmutz J."/>
            <person name="Larimer F."/>
            <person name="Land M."/>
            <person name="Hauser L."/>
            <person name="Kyrpides N."/>
            <person name="Mikhailova N."/>
            <person name="Hoff W."/>
            <person name="Richardson P."/>
        </authorList>
    </citation>
    <scope>NUCLEOTIDE SEQUENCE [LARGE SCALE GENOMIC DNA]</scope>
    <source>
        <strain>DSM 244 / SL1</strain>
    </source>
</reference>